<accession>B9LA97</accession>
<protein>
    <recommendedName>
        <fullName evidence="1">tRNA/tmRNA (uracil-C(5))-methyltransferase</fullName>
        <ecNumber evidence="1">2.1.1.-</ecNumber>
        <ecNumber evidence="1">2.1.1.35</ecNumber>
    </recommendedName>
    <alternativeName>
        <fullName evidence="1">tRNA (uracil(54)-C(5))-methyltransferase</fullName>
    </alternativeName>
    <alternativeName>
        <fullName evidence="1">tRNA(m5U54)-methyltransferase</fullName>
        <shortName evidence="1">RUMT</shortName>
    </alternativeName>
    <alternativeName>
        <fullName evidence="1">tmRNA (uracil(341)-C(5))-methyltransferase</fullName>
    </alternativeName>
</protein>
<organism>
    <name type="scientific">Nautilia profundicola (strain ATCC BAA-1463 / DSM 18972 / AmH)</name>
    <dbReference type="NCBI Taxonomy" id="598659"/>
    <lineage>
        <taxon>Bacteria</taxon>
        <taxon>Pseudomonadati</taxon>
        <taxon>Campylobacterota</taxon>
        <taxon>Epsilonproteobacteria</taxon>
        <taxon>Nautiliales</taxon>
        <taxon>Nautiliaceae</taxon>
        <taxon>Nautilia</taxon>
    </lineage>
</organism>
<feature type="chain" id="PRO_0000388557" description="tRNA/tmRNA (uracil-C(5))-methyltransferase">
    <location>
        <begin position="1"/>
        <end position="365"/>
    </location>
</feature>
<feature type="active site" description="Nucleophile" evidence="1">
    <location>
        <position position="323"/>
    </location>
</feature>
<feature type="active site" description="Proton acceptor" evidence="1">
    <location>
        <position position="357"/>
    </location>
</feature>
<feature type="binding site" evidence="1">
    <location>
        <position position="196"/>
    </location>
    <ligand>
        <name>S-adenosyl-L-methionine</name>
        <dbReference type="ChEBI" id="CHEBI:59789"/>
    </ligand>
</feature>
<feature type="binding site" evidence="1">
    <location>
        <position position="224"/>
    </location>
    <ligand>
        <name>S-adenosyl-L-methionine</name>
        <dbReference type="ChEBI" id="CHEBI:59789"/>
    </ligand>
</feature>
<feature type="binding site" evidence="1">
    <location>
        <position position="229"/>
    </location>
    <ligand>
        <name>S-adenosyl-L-methionine</name>
        <dbReference type="ChEBI" id="CHEBI:59789"/>
    </ligand>
</feature>
<feature type="binding site" evidence="1">
    <location>
        <position position="245"/>
    </location>
    <ligand>
        <name>S-adenosyl-L-methionine</name>
        <dbReference type="ChEBI" id="CHEBI:59789"/>
    </ligand>
</feature>
<feature type="binding site" evidence="1">
    <location>
        <position position="298"/>
    </location>
    <ligand>
        <name>S-adenosyl-L-methionine</name>
        <dbReference type="ChEBI" id="CHEBI:59789"/>
    </ligand>
</feature>
<comment type="function">
    <text evidence="1">Dual-specificity methyltransferase that catalyzes the formation of 5-methyluridine at position 54 (m5U54) in all tRNAs, and that of position 341 (m5U341) in tmRNA (transfer-mRNA).</text>
</comment>
<comment type="catalytic activity">
    <reaction evidence="1">
        <text>uridine(54) in tRNA + S-adenosyl-L-methionine = 5-methyluridine(54) in tRNA + S-adenosyl-L-homocysteine + H(+)</text>
        <dbReference type="Rhea" id="RHEA:42712"/>
        <dbReference type="Rhea" id="RHEA-COMP:10167"/>
        <dbReference type="Rhea" id="RHEA-COMP:10193"/>
        <dbReference type="ChEBI" id="CHEBI:15378"/>
        <dbReference type="ChEBI" id="CHEBI:57856"/>
        <dbReference type="ChEBI" id="CHEBI:59789"/>
        <dbReference type="ChEBI" id="CHEBI:65315"/>
        <dbReference type="ChEBI" id="CHEBI:74447"/>
        <dbReference type="EC" id="2.1.1.35"/>
    </reaction>
</comment>
<comment type="catalytic activity">
    <reaction evidence="1">
        <text>uridine(341) in tmRNA + S-adenosyl-L-methionine = 5-methyluridine(341) in tmRNA + S-adenosyl-L-homocysteine + H(+)</text>
        <dbReference type="Rhea" id="RHEA:43612"/>
        <dbReference type="Rhea" id="RHEA-COMP:10630"/>
        <dbReference type="Rhea" id="RHEA-COMP:10631"/>
        <dbReference type="ChEBI" id="CHEBI:15378"/>
        <dbReference type="ChEBI" id="CHEBI:57856"/>
        <dbReference type="ChEBI" id="CHEBI:59789"/>
        <dbReference type="ChEBI" id="CHEBI:65315"/>
        <dbReference type="ChEBI" id="CHEBI:74447"/>
    </reaction>
</comment>
<comment type="similarity">
    <text evidence="1">Belongs to the class I-like SAM-binding methyltransferase superfamily. RNA M5U methyltransferase family. TrmA subfamily.</text>
</comment>
<proteinExistence type="inferred from homology"/>
<name>TRMA_NAUPA</name>
<keyword id="KW-0489">Methyltransferase</keyword>
<keyword id="KW-0949">S-adenosyl-L-methionine</keyword>
<keyword id="KW-0808">Transferase</keyword>
<keyword id="KW-0819">tRNA processing</keyword>
<evidence type="ECO:0000255" key="1">
    <source>
        <dbReference type="HAMAP-Rule" id="MF_01011"/>
    </source>
</evidence>
<reference key="1">
    <citation type="journal article" date="2009" name="PLoS Genet.">
        <title>Adaptations to submarine hydrothermal environments exemplified by the genome of Nautilia profundicola.</title>
        <authorList>
            <person name="Campbell B.J."/>
            <person name="Smith J.L."/>
            <person name="Hanson T.E."/>
            <person name="Klotz M.G."/>
            <person name="Stein L.Y."/>
            <person name="Lee C.K."/>
            <person name="Wu D."/>
            <person name="Robinson J.M."/>
            <person name="Khouri H.M."/>
            <person name="Eisen J.A."/>
            <person name="Cary S.C."/>
        </authorList>
    </citation>
    <scope>NUCLEOTIDE SEQUENCE [LARGE SCALE GENOMIC DNA]</scope>
    <source>
        <strain>ATCC BAA-1463 / DSM 18972 / AmH</strain>
    </source>
</reference>
<sequence>MTCSSFGKCGSCVLWEMPYDEQLKMKSEKLKEMFSEFDMPEIEVVHGSDEHFRARAEFRVWHEGDKSYYAMRKRKEDGRGVIPIEECKIVDKAIYDIMTPLLKEIEKNDNLRFKLYEIDFLSNSKGELIITLIYHKKVDESIAEDIKKLKEKFKNADFIVRKKGRKYVFDKNYLIEELNINSKTYKYKIIENTFSQPNRQMNQKMIEWAMRNSEDLKGDLVELYCGNGNFTIPLSERFNKVIATEISKESIEAATYNAEINARDNITFLAMSAAEFSKLYKDRSPLITKYDLKNILIDPPRAGLDDKSREFVNEFDNIIYISCNPETLQRDLKTLAKGREIKAFAFFDQFPYTNHAECGVILKKN</sequence>
<dbReference type="EC" id="2.1.1.-" evidence="1"/>
<dbReference type="EC" id="2.1.1.35" evidence="1"/>
<dbReference type="EMBL" id="CP001279">
    <property type="protein sequence ID" value="ACM92923.1"/>
    <property type="molecule type" value="Genomic_DNA"/>
</dbReference>
<dbReference type="RefSeq" id="WP_015901975.1">
    <property type="nucleotide sequence ID" value="NC_012115.1"/>
</dbReference>
<dbReference type="SMR" id="B9LA97"/>
<dbReference type="STRING" id="598659.NAMH_1159"/>
<dbReference type="KEGG" id="nam:NAMH_1159"/>
<dbReference type="eggNOG" id="COG2265">
    <property type="taxonomic scope" value="Bacteria"/>
</dbReference>
<dbReference type="HOGENOM" id="CLU_043022_0_0_7"/>
<dbReference type="OrthoDB" id="9804590at2"/>
<dbReference type="Proteomes" id="UP000000448">
    <property type="component" value="Chromosome"/>
</dbReference>
<dbReference type="GO" id="GO:0005829">
    <property type="term" value="C:cytosol"/>
    <property type="evidence" value="ECO:0007669"/>
    <property type="project" value="TreeGrafter"/>
</dbReference>
<dbReference type="GO" id="GO:0019843">
    <property type="term" value="F:rRNA binding"/>
    <property type="evidence" value="ECO:0007669"/>
    <property type="project" value="TreeGrafter"/>
</dbReference>
<dbReference type="GO" id="GO:0030697">
    <property type="term" value="F:tRNA (uracil(54)-C5)-methyltransferase activity, S-adenosyl methionine-dependent"/>
    <property type="evidence" value="ECO:0007669"/>
    <property type="project" value="UniProtKB-EC"/>
</dbReference>
<dbReference type="GO" id="GO:0000049">
    <property type="term" value="F:tRNA binding"/>
    <property type="evidence" value="ECO:0007669"/>
    <property type="project" value="TreeGrafter"/>
</dbReference>
<dbReference type="GO" id="GO:0032259">
    <property type="term" value="P:methylation"/>
    <property type="evidence" value="ECO:0007669"/>
    <property type="project" value="UniProtKB-KW"/>
</dbReference>
<dbReference type="GO" id="GO:0008033">
    <property type="term" value="P:tRNA processing"/>
    <property type="evidence" value="ECO:0007669"/>
    <property type="project" value="UniProtKB-KW"/>
</dbReference>
<dbReference type="CDD" id="cd02440">
    <property type="entry name" value="AdoMet_MTases"/>
    <property type="match status" value="1"/>
</dbReference>
<dbReference type="Gene3D" id="2.40.50.1070">
    <property type="match status" value="1"/>
</dbReference>
<dbReference type="Gene3D" id="3.40.50.150">
    <property type="entry name" value="Vaccinia Virus protein VP39"/>
    <property type="match status" value="1"/>
</dbReference>
<dbReference type="HAMAP" id="MF_01011">
    <property type="entry name" value="RNA_methyltr_TrmA"/>
    <property type="match status" value="1"/>
</dbReference>
<dbReference type="InterPro" id="IPR030390">
    <property type="entry name" value="MeTrfase_TrmA_AS"/>
</dbReference>
<dbReference type="InterPro" id="IPR029063">
    <property type="entry name" value="SAM-dependent_MTases_sf"/>
</dbReference>
<dbReference type="InterPro" id="IPR011869">
    <property type="entry name" value="TrmA_MeTrfase"/>
</dbReference>
<dbReference type="InterPro" id="IPR010280">
    <property type="entry name" value="U5_MeTrfase_fam"/>
</dbReference>
<dbReference type="NCBIfam" id="TIGR02143">
    <property type="entry name" value="trmA_only"/>
    <property type="match status" value="1"/>
</dbReference>
<dbReference type="PANTHER" id="PTHR47790">
    <property type="entry name" value="TRNA/TMRNA (URACIL-C(5))-METHYLTRANSFERASE"/>
    <property type="match status" value="1"/>
</dbReference>
<dbReference type="PANTHER" id="PTHR47790:SF2">
    <property type="entry name" value="TRNA_TMRNA (URACIL-C(5))-METHYLTRANSFERASE"/>
    <property type="match status" value="1"/>
</dbReference>
<dbReference type="Pfam" id="PF05958">
    <property type="entry name" value="tRNA_U5-meth_tr"/>
    <property type="match status" value="1"/>
</dbReference>
<dbReference type="SUPFAM" id="SSF53335">
    <property type="entry name" value="S-adenosyl-L-methionine-dependent methyltransferases"/>
    <property type="match status" value="1"/>
</dbReference>
<dbReference type="PROSITE" id="PS51687">
    <property type="entry name" value="SAM_MT_RNA_M5U"/>
    <property type="match status" value="1"/>
</dbReference>
<dbReference type="PROSITE" id="PS01230">
    <property type="entry name" value="TRMA_1"/>
    <property type="match status" value="1"/>
</dbReference>
<gene>
    <name evidence="1" type="primary">trmA</name>
    <name type="ordered locus">NAMH_1159</name>
</gene>